<keyword id="KW-0687">Ribonucleoprotein</keyword>
<keyword id="KW-0689">Ribosomal protein</keyword>
<keyword id="KW-0694">RNA-binding</keyword>
<keyword id="KW-0699">rRNA-binding</keyword>
<evidence type="ECO:0000255" key="1">
    <source>
        <dbReference type="HAMAP-Rule" id="MF_01363"/>
    </source>
</evidence>
<evidence type="ECO:0000305" key="2"/>
<feature type="chain" id="PRO_1000086993" description="Large ribosomal subunit protein bL21">
    <location>
        <begin position="1"/>
        <end position="105"/>
    </location>
</feature>
<dbReference type="EMBL" id="CP000766">
    <property type="protein sequence ID" value="ABY73103.1"/>
    <property type="molecule type" value="Genomic_DNA"/>
</dbReference>
<dbReference type="RefSeq" id="WP_004997480.1">
    <property type="nucleotide sequence ID" value="NC_010263.3"/>
</dbReference>
<dbReference type="SMR" id="B0BV43"/>
<dbReference type="GeneID" id="95361581"/>
<dbReference type="KEGG" id="rrj:RrIowa_1369"/>
<dbReference type="eggNOG" id="COG0261">
    <property type="taxonomic scope" value="Bacteria"/>
</dbReference>
<dbReference type="HOGENOM" id="CLU_061463_3_2_5"/>
<dbReference type="Proteomes" id="UP000000796">
    <property type="component" value="Chromosome"/>
</dbReference>
<dbReference type="GO" id="GO:0005737">
    <property type="term" value="C:cytoplasm"/>
    <property type="evidence" value="ECO:0007669"/>
    <property type="project" value="UniProtKB-ARBA"/>
</dbReference>
<dbReference type="GO" id="GO:1990904">
    <property type="term" value="C:ribonucleoprotein complex"/>
    <property type="evidence" value="ECO:0007669"/>
    <property type="project" value="UniProtKB-KW"/>
</dbReference>
<dbReference type="GO" id="GO:0005840">
    <property type="term" value="C:ribosome"/>
    <property type="evidence" value="ECO:0007669"/>
    <property type="project" value="UniProtKB-KW"/>
</dbReference>
<dbReference type="GO" id="GO:0019843">
    <property type="term" value="F:rRNA binding"/>
    <property type="evidence" value="ECO:0007669"/>
    <property type="project" value="UniProtKB-UniRule"/>
</dbReference>
<dbReference type="GO" id="GO:0003735">
    <property type="term" value="F:structural constituent of ribosome"/>
    <property type="evidence" value="ECO:0007669"/>
    <property type="project" value="InterPro"/>
</dbReference>
<dbReference type="GO" id="GO:0006412">
    <property type="term" value="P:translation"/>
    <property type="evidence" value="ECO:0007669"/>
    <property type="project" value="UniProtKB-UniRule"/>
</dbReference>
<dbReference type="HAMAP" id="MF_01363">
    <property type="entry name" value="Ribosomal_bL21"/>
    <property type="match status" value="1"/>
</dbReference>
<dbReference type="InterPro" id="IPR028909">
    <property type="entry name" value="bL21-like"/>
</dbReference>
<dbReference type="InterPro" id="IPR036164">
    <property type="entry name" value="bL21-like_sf"/>
</dbReference>
<dbReference type="InterPro" id="IPR001787">
    <property type="entry name" value="Ribosomal_bL21"/>
</dbReference>
<dbReference type="InterPro" id="IPR018258">
    <property type="entry name" value="Ribosomal_bL21_CS"/>
</dbReference>
<dbReference type="NCBIfam" id="TIGR00061">
    <property type="entry name" value="L21"/>
    <property type="match status" value="1"/>
</dbReference>
<dbReference type="PANTHER" id="PTHR21349">
    <property type="entry name" value="50S RIBOSOMAL PROTEIN L21"/>
    <property type="match status" value="1"/>
</dbReference>
<dbReference type="PANTHER" id="PTHR21349:SF0">
    <property type="entry name" value="LARGE RIBOSOMAL SUBUNIT PROTEIN BL21M"/>
    <property type="match status" value="1"/>
</dbReference>
<dbReference type="Pfam" id="PF00829">
    <property type="entry name" value="Ribosomal_L21p"/>
    <property type="match status" value="1"/>
</dbReference>
<dbReference type="SUPFAM" id="SSF141091">
    <property type="entry name" value="L21p-like"/>
    <property type="match status" value="1"/>
</dbReference>
<dbReference type="PROSITE" id="PS01169">
    <property type="entry name" value="RIBOSOMAL_L21"/>
    <property type="match status" value="1"/>
</dbReference>
<sequence>MFAVIKAGGKQYKVDRNSIIKVEKIDGELGSKIQFDQILMIGEYSKPSFIGTPIVKGAVVTAEITNQLKDNKIIVFKKKRRKNYRRKAGHRQELTELKILDITKQ</sequence>
<accession>B0BV43</accession>
<gene>
    <name evidence="1" type="primary">rplU</name>
    <name type="ordered locus">RrIowa_1369</name>
</gene>
<reference key="1">
    <citation type="journal article" date="2008" name="Infect. Immun.">
        <title>Genomic comparison of virulent Rickettsia rickettsii Sheila Smith and avirulent Rickettsia rickettsii Iowa.</title>
        <authorList>
            <person name="Ellison D.W."/>
            <person name="Clark T.R."/>
            <person name="Sturdevant D.E."/>
            <person name="Virtaneva K."/>
            <person name="Porcella S.F."/>
            <person name="Hackstadt T."/>
        </authorList>
    </citation>
    <scope>NUCLEOTIDE SEQUENCE [LARGE SCALE GENOMIC DNA]</scope>
    <source>
        <strain>Iowa</strain>
    </source>
</reference>
<organism>
    <name type="scientific">Rickettsia rickettsii (strain Iowa)</name>
    <dbReference type="NCBI Taxonomy" id="452659"/>
    <lineage>
        <taxon>Bacteria</taxon>
        <taxon>Pseudomonadati</taxon>
        <taxon>Pseudomonadota</taxon>
        <taxon>Alphaproteobacteria</taxon>
        <taxon>Rickettsiales</taxon>
        <taxon>Rickettsiaceae</taxon>
        <taxon>Rickettsieae</taxon>
        <taxon>Rickettsia</taxon>
        <taxon>spotted fever group</taxon>
    </lineage>
</organism>
<proteinExistence type="inferred from homology"/>
<protein>
    <recommendedName>
        <fullName evidence="1">Large ribosomal subunit protein bL21</fullName>
    </recommendedName>
    <alternativeName>
        <fullName evidence="2">50S ribosomal protein L21</fullName>
    </alternativeName>
</protein>
<comment type="function">
    <text evidence="1">This protein binds to 23S rRNA in the presence of protein L20.</text>
</comment>
<comment type="subunit">
    <text evidence="1">Part of the 50S ribosomal subunit. Contacts protein L20.</text>
</comment>
<comment type="similarity">
    <text evidence="1">Belongs to the bacterial ribosomal protein bL21 family.</text>
</comment>
<name>RL21_RICRO</name>